<comment type="function">
    <text evidence="1">Cell wall formation.</text>
</comment>
<comment type="catalytic activity">
    <reaction evidence="1">
        <text>UDP-N-acetyl-alpha-D-muramate + L-alanine + ATP = UDP-N-acetyl-alpha-D-muramoyl-L-alanine + ADP + phosphate + H(+)</text>
        <dbReference type="Rhea" id="RHEA:23372"/>
        <dbReference type="ChEBI" id="CHEBI:15378"/>
        <dbReference type="ChEBI" id="CHEBI:30616"/>
        <dbReference type="ChEBI" id="CHEBI:43474"/>
        <dbReference type="ChEBI" id="CHEBI:57972"/>
        <dbReference type="ChEBI" id="CHEBI:70757"/>
        <dbReference type="ChEBI" id="CHEBI:83898"/>
        <dbReference type="ChEBI" id="CHEBI:456216"/>
        <dbReference type="EC" id="6.3.2.8"/>
    </reaction>
</comment>
<comment type="pathway">
    <text evidence="1">Cell wall biogenesis; peptidoglycan biosynthesis.</text>
</comment>
<comment type="subcellular location">
    <subcellularLocation>
        <location evidence="1">Cytoplasm</location>
    </subcellularLocation>
</comment>
<comment type="similarity">
    <text evidence="1">Belongs to the MurCDEF family.</text>
</comment>
<proteinExistence type="inferred from homology"/>
<protein>
    <recommendedName>
        <fullName evidence="1">UDP-N-acetylmuramate--L-alanine ligase</fullName>
        <ecNumber evidence="1">6.3.2.8</ecNumber>
    </recommendedName>
    <alternativeName>
        <fullName evidence="1">UDP-N-acetylmuramoyl-L-alanine synthetase</fullName>
    </alternativeName>
</protein>
<reference key="1">
    <citation type="journal article" date="2006" name="Nat. Biotechnol.">
        <title>Genome sequence of the bioplastic-producing 'Knallgas' bacterium Ralstonia eutropha H16.</title>
        <authorList>
            <person name="Pohlmann A."/>
            <person name="Fricke W.F."/>
            <person name="Reinecke F."/>
            <person name="Kusian B."/>
            <person name="Liesegang H."/>
            <person name="Cramm R."/>
            <person name="Eitinger T."/>
            <person name="Ewering C."/>
            <person name="Poetter M."/>
            <person name="Schwartz E."/>
            <person name="Strittmatter A."/>
            <person name="Voss I."/>
            <person name="Gottschalk G."/>
            <person name="Steinbuechel A."/>
            <person name="Friedrich B."/>
            <person name="Bowien B."/>
        </authorList>
    </citation>
    <scope>NUCLEOTIDE SEQUENCE [LARGE SCALE GENOMIC DNA]</scope>
    <source>
        <strain>ATCC 17699 / DSM 428 / KCTC 22496 / NCIMB 10442 / H16 / Stanier 337</strain>
    </source>
</reference>
<feature type="chain" id="PRO_1000004390" description="UDP-N-acetylmuramate--L-alanine ligase">
    <location>
        <begin position="1"/>
        <end position="477"/>
    </location>
</feature>
<feature type="binding site" evidence="1">
    <location>
        <begin position="112"/>
        <end position="118"/>
    </location>
    <ligand>
        <name>ATP</name>
        <dbReference type="ChEBI" id="CHEBI:30616"/>
    </ligand>
</feature>
<sequence>MKHIVKNIHFVGIGGAGMSGIAEVLLNLGYKVSGSDVGNNAATRRLASLGATVMHGHDAANVTGANAVVVSTAVSGDNPEVLAARSKRIPVVPRAVMLAELMRLKQGVAIAGTHGKTTTTSLVASVLAEGGLDPTFVIGGRLNSAGANARLGTGDFIVAEADESDASFLNLFPVIEVITNIDADHMDTYGHDFARLKQAFIEFTQRLPFYGIAVLCVDDPNVREILPFVSKPVVRYGFAEDAQIRAVDARAVDGQMHFTVQRQLNGHTEPPLEIVLNLPGLHNVQNALAAIAIATELEVPDAAIVKALREFHGVGRRFQRYGEVATPDGAGTFTLVDDYGHHPVEMAATLAAARGAFPGRRLVLAFQPHRFTRTRDCFEDFVKVLGTVDALLLSEVYAAGEAPIVAADGRALTRALRVAGKVEPVFVEQMEEMPQAILDAVRPGDVVVTMGAGSIGAVPGQLVSHQQSTQSTQGGQA</sequence>
<name>MURC_CUPNH</name>
<keyword id="KW-0067">ATP-binding</keyword>
<keyword id="KW-0131">Cell cycle</keyword>
<keyword id="KW-0132">Cell division</keyword>
<keyword id="KW-0133">Cell shape</keyword>
<keyword id="KW-0961">Cell wall biogenesis/degradation</keyword>
<keyword id="KW-0963">Cytoplasm</keyword>
<keyword id="KW-0436">Ligase</keyword>
<keyword id="KW-0547">Nucleotide-binding</keyword>
<keyword id="KW-0573">Peptidoglycan synthesis</keyword>
<keyword id="KW-1185">Reference proteome</keyword>
<accession>Q0K6M5</accession>
<dbReference type="EC" id="6.3.2.8" evidence="1"/>
<dbReference type="EMBL" id="AM260479">
    <property type="protein sequence ID" value="CAJ94346.1"/>
    <property type="molecule type" value="Genomic_DNA"/>
</dbReference>
<dbReference type="RefSeq" id="WP_010814768.1">
    <property type="nucleotide sequence ID" value="NZ_CP039287.1"/>
</dbReference>
<dbReference type="SMR" id="Q0K6M5"/>
<dbReference type="STRING" id="381666.H16_A3272"/>
<dbReference type="KEGG" id="reh:H16_A3272"/>
<dbReference type="eggNOG" id="COG0773">
    <property type="taxonomic scope" value="Bacteria"/>
</dbReference>
<dbReference type="HOGENOM" id="CLU_028104_2_2_4"/>
<dbReference type="OrthoDB" id="9804126at2"/>
<dbReference type="UniPathway" id="UPA00219"/>
<dbReference type="Proteomes" id="UP000008210">
    <property type="component" value="Chromosome 1"/>
</dbReference>
<dbReference type="GO" id="GO:0005737">
    <property type="term" value="C:cytoplasm"/>
    <property type="evidence" value="ECO:0007669"/>
    <property type="project" value="UniProtKB-SubCell"/>
</dbReference>
<dbReference type="GO" id="GO:0005524">
    <property type="term" value="F:ATP binding"/>
    <property type="evidence" value="ECO:0007669"/>
    <property type="project" value="UniProtKB-UniRule"/>
</dbReference>
<dbReference type="GO" id="GO:0008763">
    <property type="term" value="F:UDP-N-acetylmuramate-L-alanine ligase activity"/>
    <property type="evidence" value="ECO:0007669"/>
    <property type="project" value="UniProtKB-UniRule"/>
</dbReference>
<dbReference type="GO" id="GO:0051301">
    <property type="term" value="P:cell division"/>
    <property type="evidence" value="ECO:0007669"/>
    <property type="project" value="UniProtKB-KW"/>
</dbReference>
<dbReference type="GO" id="GO:0071555">
    <property type="term" value="P:cell wall organization"/>
    <property type="evidence" value="ECO:0007669"/>
    <property type="project" value="UniProtKB-KW"/>
</dbReference>
<dbReference type="GO" id="GO:0009252">
    <property type="term" value="P:peptidoglycan biosynthetic process"/>
    <property type="evidence" value="ECO:0007669"/>
    <property type="project" value="UniProtKB-UniRule"/>
</dbReference>
<dbReference type="GO" id="GO:0008360">
    <property type="term" value="P:regulation of cell shape"/>
    <property type="evidence" value="ECO:0007669"/>
    <property type="project" value="UniProtKB-KW"/>
</dbReference>
<dbReference type="FunFam" id="3.40.1190.10:FF:000001">
    <property type="entry name" value="UDP-N-acetylmuramate--L-alanine ligase"/>
    <property type="match status" value="1"/>
</dbReference>
<dbReference type="Gene3D" id="3.90.190.20">
    <property type="entry name" value="Mur ligase, C-terminal domain"/>
    <property type="match status" value="1"/>
</dbReference>
<dbReference type="Gene3D" id="3.40.1190.10">
    <property type="entry name" value="Mur-like, catalytic domain"/>
    <property type="match status" value="1"/>
</dbReference>
<dbReference type="Gene3D" id="3.40.50.720">
    <property type="entry name" value="NAD(P)-binding Rossmann-like Domain"/>
    <property type="match status" value="1"/>
</dbReference>
<dbReference type="HAMAP" id="MF_00046">
    <property type="entry name" value="MurC"/>
    <property type="match status" value="1"/>
</dbReference>
<dbReference type="InterPro" id="IPR036565">
    <property type="entry name" value="Mur-like_cat_sf"/>
</dbReference>
<dbReference type="InterPro" id="IPR004101">
    <property type="entry name" value="Mur_ligase_C"/>
</dbReference>
<dbReference type="InterPro" id="IPR036615">
    <property type="entry name" value="Mur_ligase_C_dom_sf"/>
</dbReference>
<dbReference type="InterPro" id="IPR013221">
    <property type="entry name" value="Mur_ligase_cen"/>
</dbReference>
<dbReference type="InterPro" id="IPR000713">
    <property type="entry name" value="Mur_ligase_N"/>
</dbReference>
<dbReference type="InterPro" id="IPR050061">
    <property type="entry name" value="MurCDEF_pg_biosynth"/>
</dbReference>
<dbReference type="InterPro" id="IPR005758">
    <property type="entry name" value="UDP-N-AcMur_Ala_ligase_MurC"/>
</dbReference>
<dbReference type="NCBIfam" id="TIGR01082">
    <property type="entry name" value="murC"/>
    <property type="match status" value="1"/>
</dbReference>
<dbReference type="PANTHER" id="PTHR43445:SF3">
    <property type="entry name" value="UDP-N-ACETYLMURAMATE--L-ALANINE LIGASE"/>
    <property type="match status" value="1"/>
</dbReference>
<dbReference type="PANTHER" id="PTHR43445">
    <property type="entry name" value="UDP-N-ACETYLMURAMATE--L-ALANINE LIGASE-RELATED"/>
    <property type="match status" value="1"/>
</dbReference>
<dbReference type="Pfam" id="PF01225">
    <property type="entry name" value="Mur_ligase"/>
    <property type="match status" value="1"/>
</dbReference>
<dbReference type="Pfam" id="PF02875">
    <property type="entry name" value="Mur_ligase_C"/>
    <property type="match status" value="1"/>
</dbReference>
<dbReference type="Pfam" id="PF08245">
    <property type="entry name" value="Mur_ligase_M"/>
    <property type="match status" value="1"/>
</dbReference>
<dbReference type="SUPFAM" id="SSF51984">
    <property type="entry name" value="MurCD N-terminal domain"/>
    <property type="match status" value="1"/>
</dbReference>
<dbReference type="SUPFAM" id="SSF53623">
    <property type="entry name" value="MurD-like peptide ligases, catalytic domain"/>
    <property type="match status" value="1"/>
</dbReference>
<dbReference type="SUPFAM" id="SSF53244">
    <property type="entry name" value="MurD-like peptide ligases, peptide-binding domain"/>
    <property type="match status" value="1"/>
</dbReference>
<organism>
    <name type="scientific">Cupriavidus necator (strain ATCC 17699 / DSM 428 / KCTC 22496 / NCIMB 10442 / H16 / Stanier 337)</name>
    <name type="common">Ralstonia eutropha</name>
    <dbReference type="NCBI Taxonomy" id="381666"/>
    <lineage>
        <taxon>Bacteria</taxon>
        <taxon>Pseudomonadati</taxon>
        <taxon>Pseudomonadota</taxon>
        <taxon>Betaproteobacteria</taxon>
        <taxon>Burkholderiales</taxon>
        <taxon>Burkholderiaceae</taxon>
        <taxon>Cupriavidus</taxon>
    </lineage>
</organism>
<evidence type="ECO:0000255" key="1">
    <source>
        <dbReference type="HAMAP-Rule" id="MF_00046"/>
    </source>
</evidence>
<gene>
    <name evidence="1" type="primary">murC</name>
    <name type="ordered locus">H16_A3272</name>
</gene>